<dbReference type="EMBL" id="FM180568">
    <property type="protein sequence ID" value="CAS10709.1"/>
    <property type="molecule type" value="Genomic_DNA"/>
</dbReference>
<dbReference type="RefSeq" id="WP_001295378.1">
    <property type="nucleotide sequence ID" value="NC_011601.1"/>
</dbReference>
<dbReference type="SMR" id="B7UHV7"/>
<dbReference type="GeneID" id="93779092"/>
<dbReference type="KEGG" id="ecg:E2348C_3161"/>
<dbReference type="HOGENOM" id="CLU_085336_1_0_6"/>
<dbReference type="Proteomes" id="UP000008205">
    <property type="component" value="Chromosome"/>
</dbReference>
<dbReference type="GO" id="GO:0005829">
    <property type="term" value="C:cytosol"/>
    <property type="evidence" value="ECO:0007669"/>
    <property type="project" value="TreeGrafter"/>
</dbReference>
<dbReference type="FunFam" id="1.20.120.740:FF:000001">
    <property type="entry name" value="UPF0149 protein YgfB"/>
    <property type="match status" value="1"/>
</dbReference>
<dbReference type="Gene3D" id="1.20.120.740">
    <property type="entry name" value="YgfB uncharacterised protein family UPF0149, PF03695"/>
    <property type="match status" value="1"/>
</dbReference>
<dbReference type="HAMAP" id="MF_00346">
    <property type="entry name" value="UPF0149"/>
    <property type="match status" value="1"/>
</dbReference>
<dbReference type="InterPro" id="IPR011978">
    <property type="entry name" value="YgfB-like"/>
</dbReference>
<dbReference type="InterPro" id="IPR036255">
    <property type="entry name" value="YgfB-like_sf"/>
</dbReference>
<dbReference type="NCBIfam" id="NF002477">
    <property type="entry name" value="PRK01736.1"/>
    <property type="match status" value="1"/>
</dbReference>
<dbReference type="NCBIfam" id="TIGR02292">
    <property type="entry name" value="ygfB_yecA"/>
    <property type="match status" value="1"/>
</dbReference>
<dbReference type="PANTHER" id="PTHR37528">
    <property type="entry name" value="UPF0149 PROTEIN YGFB"/>
    <property type="match status" value="1"/>
</dbReference>
<dbReference type="PANTHER" id="PTHR37528:SF1">
    <property type="entry name" value="UPF0149 PROTEIN YGFB"/>
    <property type="match status" value="1"/>
</dbReference>
<dbReference type="Pfam" id="PF03695">
    <property type="entry name" value="UPF0149"/>
    <property type="match status" value="1"/>
</dbReference>
<dbReference type="SUPFAM" id="SSF101327">
    <property type="entry name" value="YgfB-like"/>
    <property type="match status" value="1"/>
</dbReference>
<sequence>MSIQNEMPGYNEMNQYLNQQGTGLTPAEMHGLISGMICGGNDDSSWLPLLHDLTNEGMAFGHELAQALRKMHSATSDALQDDGFLFQLYLPDGDDVSVFDRADALAGWVNHFLLGLGVTQPKLDKVTGETGEAIDDLRNIAQLGYDEDEDQEELEMSLEEIIEYVRVAALLCHDTFTHPQPTAPEVQKPTLH</sequence>
<proteinExistence type="inferred from homology"/>
<reference key="1">
    <citation type="journal article" date="2009" name="J. Bacteriol.">
        <title>Complete genome sequence and comparative genome analysis of enteropathogenic Escherichia coli O127:H6 strain E2348/69.</title>
        <authorList>
            <person name="Iguchi A."/>
            <person name="Thomson N.R."/>
            <person name="Ogura Y."/>
            <person name="Saunders D."/>
            <person name="Ooka T."/>
            <person name="Henderson I.R."/>
            <person name="Harris D."/>
            <person name="Asadulghani M."/>
            <person name="Kurokawa K."/>
            <person name="Dean P."/>
            <person name="Kenny B."/>
            <person name="Quail M.A."/>
            <person name="Thurston S."/>
            <person name="Dougan G."/>
            <person name="Hayashi T."/>
            <person name="Parkhill J."/>
            <person name="Frankel G."/>
        </authorList>
    </citation>
    <scope>NUCLEOTIDE SEQUENCE [LARGE SCALE GENOMIC DNA]</scope>
    <source>
        <strain>E2348/69 / EPEC</strain>
    </source>
</reference>
<organism>
    <name type="scientific">Escherichia coli O127:H6 (strain E2348/69 / EPEC)</name>
    <dbReference type="NCBI Taxonomy" id="574521"/>
    <lineage>
        <taxon>Bacteria</taxon>
        <taxon>Pseudomonadati</taxon>
        <taxon>Pseudomonadota</taxon>
        <taxon>Gammaproteobacteria</taxon>
        <taxon>Enterobacterales</taxon>
        <taxon>Enterobacteriaceae</taxon>
        <taxon>Escherichia</taxon>
    </lineage>
</organism>
<accession>B7UHV7</accession>
<evidence type="ECO:0000255" key="1">
    <source>
        <dbReference type="HAMAP-Rule" id="MF_00346"/>
    </source>
</evidence>
<keyword id="KW-1185">Reference proteome</keyword>
<comment type="similarity">
    <text evidence="1">Belongs to the UPF0149 family.</text>
</comment>
<feature type="chain" id="PRO_1000133395" description="UPF0149 protein YgfB">
    <location>
        <begin position="1"/>
        <end position="192"/>
    </location>
</feature>
<gene>
    <name evidence="1" type="primary">ygfB</name>
    <name type="ordered locus">E2348C_3161</name>
</gene>
<protein>
    <recommendedName>
        <fullName evidence="1">UPF0149 protein YgfB</fullName>
    </recommendedName>
</protein>
<name>YGFB_ECO27</name>